<comment type="function">
    <text evidence="3 6">Cytochrome P450 monooxygenase; part of the gene cluster that mediates the biosynthesis of polyesters containing 2,4-dihydroxy-6-(2-hydroxypropyl)benzoate and 3-hydroxybutyrate moieties, such as talapolyester G, 15G256beta and 15G256beta-2; as well as to oxidized derivatives such as 15G256alpha (PubMed:35889347). The biosynthesis of the polyesters probably starts with the formation of the diketide 3-hydroxybutyryl-S-ACP catalyzed by the partially reducing polyketide synthase tpeA (Probable). The acceptance of 3-hydroxybutyryl by the non-reducing polyketide synthase tpeB would initiate further elongation and cyclization, catalyzed by KS and PT, respectively, to form 2,4-dihydroxy-6-(2-hydroxyn-propyl)benzoyl-S-ACP intermediate (Probable). The TE domain could catalyze lactonization at this step to yield 6-hydroxymellein as a derailment product (Probable). The polyesterification process maybe occurs when additional molecules of 3-hydroxybutyryl are transferred to tpeB (Probable). Following the first esterification step, an intramolecular cyclization catalyzed by the TE domain of tpeB would give talarodioxadione 1, whereas the ethyl esterification of talapolyester G perhaps happens spontaneously (Probable). Further oxidation by the cytochrome P450 monooxygenase tpeC then leads to the formation of oxidized derivatives (Probable).</text>
</comment>
<comment type="cofactor">
    <cofactor evidence="1">
        <name>heme</name>
        <dbReference type="ChEBI" id="CHEBI:30413"/>
    </cofactor>
</comment>
<comment type="pathway">
    <text evidence="3">Secondary metabolite biosynthesis.</text>
</comment>
<comment type="subcellular location">
    <subcellularLocation>
        <location evidence="2">Membrane</location>
        <topology evidence="2">Single-pass membrane protein</topology>
    </subcellularLocation>
</comment>
<comment type="similarity">
    <text evidence="5">Belongs to the cytochrome P450 family.</text>
</comment>
<organism>
    <name type="scientific">Talaromyces stipitatus (strain ATCC 10500 / CBS 375.48 / QM 6759 / NRRL 1006)</name>
    <name type="common">Penicillium stipitatum</name>
    <dbReference type="NCBI Taxonomy" id="441959"/>
    <lineage>
        <taxon>Eukaryota</taxon>
        <taxon>Fungi</taxon>
        <taxon>Dikarya</taxon>
        <taxon>Ascomycota</taxon>
        <taxon>Pezizomycotina</taxon>
        <taxon>Eurotiomycetes</taxon>
        <taxon>Eurotiomycetidae</taxon>
        <taxon>Eurotiales</taxon>
        <taxon>Trichocomaceae</taxon>
        <taxon>Talaromyces</taxon>
        <taxon>Talaromyces sect. Talaromyces</taxon>
    </lineage>
</organism>
<keyword id="KW-0349">Heme</keyword>
<keyword id="KW-0408">Iron</keyword>
<keyword id="KW-0472">Membrane</keyword>
<keyword id="KW-0479">Metal-binding</keyword>
<keyword id="KW-0503">Monooxygenase</keyword>
<keyword id="KW-0560">Oxidoreductase</keyword>
<keyword id="KW-1185">Reference proteome</keyword>
<keyword id="KW-0812">Transmembrane</keyword>
<keyword id="KW-1133">Transmembrane helix</keyword>
<gene>
    <name evidence="4" type="primary">tpeC</name>
    <name type="ORF">TSTA_008150</name>
</gene>
<feature type="chain" id="PRO_0000457629" description="Cytochrome P450 monooxygenase tpeC">
    <location>
        <begin position="1"/>
        <end position="507"/>
    </location>
</feature>
<feature type="transmembrane region" description="Helical" evidence="2">
    <location>
        <begin position="24"/>
        <end position="44"/>
    </location>
</feature>
<feature type="binding site" description="axial binding residue" evidence="1">
    <location>
        <position position="449"/>
    </location>
    <ligand>
        <name>heme</name>
        <dbReference type="ChEBI" id="CHEBI:30413"/>
    </ligand>
    <ligandPart>
        <name>Fe</name>
        <dbReference type="ChEBI" id="CHEBI:18248"/>
    </ligandPart>
</feature>
<proteinExistence type="inferred from homology"/>
<name>TPEC_TALSN</name>
<dbReference type="EC" id="1.14.-.-" evidence="6"/>
<dbReference type="EMBL" id="EQ962662">
    <property type="protein sequence ID" value="EED11517.1"/>
    <property type="molecule type" value="Genomic_DNA"/>
</dbReference>
<dbReference type="EMBL" id="EQ962662">
    <property type="protein sequence ID" value="EED11518.1"/>
    <property type="molecule type" value="Genomic_DNA"/>
</dbReference>
<dbReference type="RefSeq" id="XP_002488698.1">
    <property type="nucleotide sequence ID" value="XM_002488653.1"/>
</dbReference>
<dbReference type="RefSeq" id="XP_002488699.1">
    <property type="nucleotide sequence ID" value="XM_002488654.1"/>
</dbReference>
<dbReference type="SMR" id="B8MV61"/>
<dbReference type="STRING" id="441959.B8MV61"/>
<dbReference type="GeneID" id="8110152"/>
<dbReference type="VEuPathDB" id="FungiDB:TSTA_008150"/>
<dbReference type="eggNOG" id="KOG0158">
    <property type="taxonomic scope" value="Eukaryota"/>
</dbReference>
<dbReference type="HOGENOM" id="CLU_001570_14_11_1"/>
<dbReference type="InParanoid" id="B8MV61"/>
<dbReference type="OMA" id="VREFAFM"/>
<dbReference type="OrthoDB" id="4219675at2759"/>
<dbReference type="Proteomes" id="UP000001745">
    <property type="component" value="Unassembled WGS sequence"/>
</dbReference>
<dbReference type="GO" id="GO:0016020">
    <property type="term" value="C:membrane"/>
    <property type="evidence" value="ECO:0007669"/>
    <property type="project" value="UniProtKB-SubCell"/>
</dbReference>
<dbReference type="GO" id="GO:0020037">
    <property type="term" value="F:heme binding"/>
    <property type="evidence" value="ECO:0007669"/>
    <property type="project" value="InterPro"/>
</dbReference>
<dbReference type="GO" id="GO:0005506">
    <property type="term" value="F:iron ion binding"/>
    <property type="evidence" value="ECO:0007669"/>
    <property type="project" value="InterPro"/>
</dbReference>
<dbReference type="GO" id="GO:0004497">
    <property type="term" value="F:monooxygenase activity"/>
    <property type="evidence" value="ECO:0007669"/>
    <property type="project" value="UniProtKB-KW"/>
</dbReference>
<dbReference type="GO" id="GO:0016705">
    <property type="term" value="F:oxidoreductase activity, acting on paired donors, with incorporation or reduction of molecular oxygen"/>
    <property type="evidence" value="ECO:0007669"/>
    <property type="project" value="InterPro"/>
</dbReference>
<dbReference type="CDD" id="cd11058">
    <property type="entry name" value="CYP60B-like"/>
    <property type="match status" value="1"/>
</dbReference>
<dbReference type="FunFam" id="1.10.630.10:FF:000047">
    <property type="entry name" value="Cytochrome P450 monooxygenase"/>
    <property type="match status" value="1"/>
</dbReference>
<dbReference type="Gene3D" id="1.10.630.10">
    <property type="entry name" value="Cytochrome P450"/>
    <property type="match status" value="1"/>
</dbReference>
<dbReference type="InterPro" id="IPR001128">
    <property type="entry name" value="Cyt_P450"/>
</dbReference>
<dbReference type="InterPro" id="IPR002401">
    <property type="entry name" value="Cyt_P450_E_grp-I"/>
</dbReference>
<dbReference type="InterPro" id="IPR036396">
    <property type="entry name" value="Cyt_P450_sf"/>
</dbReference>
<dbReference type="InterPro" id="IPR050121">
    <property type="entry name" value="Cytochrome_P450_monoxygenase"/>
</dbReference>
<dbReference type="PANTHER" id="PTHR24305">
    <property type="entry name" value="CYTOCHROME P450"/>
    <property type="match status" value="1"/>
</dbReference>
<dbReference type="PANTHER" id="PTHR24305:SF230">
    <property type="entry name" value="P450, PUTATIVE (EUROFUNG)-RELATED"/>
    <property type="match status" value="1"/>
</dbReference>
<dbReference type="Pfam" id="PF00067">
    <property type="entry name" value="p450"/>
    <property type="match status" value="1"/>
</dbReference>
<dbReference type="PRINTS" id="PR00463">
    <property type="entry name" value="EP450I"/>
</dbReference>
<dbReference type="PRINTS" id="PR00385">
    <property type="entry name" value="P450"/>
</dbReference>
<dbReference type="SUPFAM" id="SSF48264">
    <property type="entry name" value="Cytochrome P450"/>
    <property type="match status" value="1"/>
</dbReference>
<protein>
    <recommendedName>
        <fullName evidence="4">Cytochrome P450 monooxygenase tpeC</fullName>
        <ecNumber evidence="6">1.14.-.-</ecNumber>
    </recommendedName>
    <alternativeName>
        <fullName evidence="4">Polyesters biosynthesis cluster protein C</fullName>
    </alternativeName>
</protein>
<reference key="1">
    <citation type="submission" date="2007-10" db="EMBL/GenBank/DDBJ databases">
        <authorList>
            <person name="Zhao H."/>
            <person name="Waite J.H."/>
        </authorList>
    </citation>
    <scope>NUCLEOTIDE SEQUENCE [GENOMIC DNA]</scope>
    <source>
        <strain>ATCC 10500 / CBS 375.48 / QM 6759 / NRRL 1006</strain>
    </source>
</reference>
<reference key="2">
    <citation type="journal article" date="2015" name="Genome Announc.">
        <title>Genome sequence of the AIDS-associated pathogen Penicillium marneffei (ATCC18224) and its near taxonomic relative Talaromyces stipitatus (ATCC10500).</title>
        <authorList>
            <person name="Nierman W.C."/>
            <person name="Fedorova-Abrams N.D."/>
            <person name="Andrianopoulos A."/>
        </authorList>
    </citation>
    <scope>NUCLEOTIDE SEQUENCE [LARGE SCALE GENOMIC DNA]</scope>
    <source>
        <strain>ATCC 10500 / CBS 375.48 / QM 6759 / NRRL 1006</strain>
    </source>
</reference>
<reference key="3">
    <citation type="journal article" date="2022" name="Molecules">
        <title>Putative Biosynthesis of Talarodioxadione &amp; Talarooxime from Talaromyces stipitatus.</title>
        <authorList>
            <person name="Al Fahad A.J."/>
        </authorList>
    </citation>
    <scope>FUNCTION</scope>
</reference>
<accession>B8MV61</accession>
<evidence type="ECO:0000250" key="1">
    <source>
        <dbReference type="UniProtKB" id="P04798"/>
    </source>
</evidence>
<evidence type="ECO:0000255" key="2"/>
<evidence type="ECO:0000269" key="3">
    <source>
    </source>
</evidence>
<evidence type="ECO:0000303" key="4">
    <source>
    </source>
</evidence>
<evidence type="ECO:0000305" key="5"/>
<evidence type="ECO:0000305" key="6">
    <source>
    </source>
</evidence>
<sequence>MSHTFHCPQPLLVMIALTIFRYATLAIALIVGFVILKAIYNVFFHPLRNFPGPLRYRASRIFWVLDLIEGRQIYTIDQFHKRYGPVVRTAPDELSFTIPEAWRDIYGHRVGLVSGLPEIPKWPLFYKFTKQDVSIFNAPQGQHGTLRRALAHGFSEKSTRAQESIIGGYVDLLVTRLKEVADSKAPANMVQWYNYTTFDIVGDLVFGNSFHCLDNANYHPWVSLFADSTRQNSIFVGLKILGLDFLALATMPLVIRNMIKHFNLTKEWLRERRKLGTDRGDLIEGLLKKEGEGINFDEIHGTSMGLIFAGSETTATLLSGVTYLLLQNPKTLAKVTMEVRSSFKSDKEITLLSVQNLDYMLACLDEAFRLYPPVGIGLPRQIPKGGVKIAGIYVPEGSIVDVPQYAIHRSPDHWTEPESFHPERFLGDSRFASDKVETLQPFAVGPRNCIGRNLAYAEMRLILARVLYNFDLKMDPSCSGWLDGQKSHALWVKPPLKVQLTPTKATS</sequence>